<protein>
    <recommendedName>
        <fullName evidence="1">5-methyltetrahydropteroyltriglutamate--homocysteine methyltransferase</fullName>
        <ecNumber evidence="1">2.1.1.14</ecNumber>
    </recommendedName>
    <alternativeName>
        <fullName evidence="1">Cobalamin-independent methionine synthase</fullName>
    </alternativeName>
    <alternativeName>
        <fullName evidence="1">Methionine synthase, vitamin-B12 independent isozyme</fullName>
    </alternativeName>
</protein>
<reference key="1">
    <citation type="journal article" date="2007" name="Appl. Environ. Microbiol.">
        <title>Genome sequence of the cellulolytic gliding bacterium Cytophaga hutchinsonii.</title>
        <authorList>
            <person name="Xie G."/>
            <person name="Bruce D.C."/>
            <person name="Challacombe J.F."/>
            <person name="Chertkov O."/>
            <person name="Detter J.C."/>
            <person name="Gilna P."/>
            <person name="Han C.S."/>
            <person name="Lucas S."/>
            <person name="Misra M."/>
            <person name="Myers G.L."/>
            <person name="Richardson P."/>
            <person name="Tapia R."/>
            <person name="Thayer N."/>
            <person name="Thompson L.S."/>
            <person name="Brettin T.S."/>
            <person name="Henrissat B."/>
            <person name="Wilson D.B."/>
            <person name="McBride M.J."/>
        </authorList>
    </citation>
    <scope>NUCLEOTIDE SEQUENCE [LARGE SCALE GENOMIC DNA]</scope>
    <source>
        <strain>ATCC 33406 / DSM 1761 / JCM 20678 / CIP 103989 / IAM 12607 / NBRC 15051 / NCIMB 9469 / D465</strain>
    </source>
</reference>
<accession>Q11PV4</accession>
<sequence>MIAHNLGYPRIGDNRELKKACEQYWSGAITQQKLQDVAKAIRTNNWLTQKDAGLDLIPCNDFSFYDQVLDMSFMLGLIPERFSSLLQKKDLTELDIYFAMARGYQKDGYDITAMEMTKWFDTNYHYIVPEFRKDQKFSPISEKAIREYTEAKVVIGKAAKPVLLGPVSYLLAGKEKEAGFNRIELIENLLPVYTKLLATLQQNGAEWIQLDEPFLVMDLTVQERKTYETTYTALRNLFPSLKFIVATYFECTGTNIDIAAKLPVDALHLDLVRCPSQLSDILTPAFISSNTMLSLGVVDGRNVWKNDFSTSSTFITKAIAALGKERVMIAPSCSLLHVPCDLDNEKNGNVLTPEIKNWMAFAKQKLHEVAALKKLNRAPMQSEELRLLKANTESIENRAKSKLIHKQHVKARVKAVQPSDSQRKSLFKSRQQIQEKALQLPLMPTTTIGSFPQTDEVRANRAKYKKGDITLAQYEDFVKTEMTKAIEWQEKIGIDVLVHGEFERNDMVEYFGEQLKGYVFSENGWVQSYGSRCVKPPIIYGDIERTEPMTVAWTTLAQSLTKKYMKGMLTGPVTILQWSFVRDDQPRRDTCMQIAFAIRDEVVDLEAAGIKIIQIDEPAIREGLPLRRENWETYLNWAVECFRISASGVKDETQIHTHMCYSEFNDIIKNIAAMDADVITIETSRSQMELLDAFVDFNYPNEIGPGVYDIHSPRIPTTDEMADLLNKAMHVLPVRNIWVNPDCGLKTRRWPETEAALINMVAAAQKIRKEITTVV</sequence>
<dbReference type="EC" id="2.1.1.14" evidence="1"/>
<dbReference type="EMBL" id="CP000383">
    <property type="protein sequence ID" value="ABG60559.1"/>
    <property type="molecule type" value="Genomic_DNA"/>
</dbReference>
<dbReference type="RefSeq" id="WP_011586667.1">
    <property type="nucleotide sequence ID" value="NC_008255.1"/>
</dbReference>
<dbReference type="SMR" id="Q11PV4"/>
<dbReference type="STRING" id="269798.CHU_3320"/>
<dbReference type="KEGG" id="chu:CHU_3320"/>
<dbReference type="eggNOG" id="COG0620">
    <property type="taxonomic scope" value="Bacteria"/>
</dbReference>
<dbReference type="HOGENOM" id="CLU_013175_0_0_10"/>
<dbReference type="OrthoDB" id="244285at2"/>
<dbReference type="UniPathway" id="UPA00051">
    <property type="reaction ID" value="UER00082"/>
</dbReference>
<dbReference type="Proteomes" id="UP000001822">
    <property type="component" value="Chromosome"/>
</dbReference>
<dbReference type="GO" id="GO:0003871">
    <property type="term" value="F:5-methyltetrahydropteroyltriglutamate-homocysteine S-methyltransferase activity"/>
    <property type="evidence" value="ECO:0007669"/>
    <property type="project" value="UniProtKB-UniRule"/>
</dbReference>
<dbReference type="GO" id="GO:0008270">
    <property type="term" value="F:zinc ion binding"/>
    <property type="evidence" value="ECO:0007669"/>
    <property type="project" value="InterPro"/>
</dbReference>
<dbReference type="GO" id="GO:0009086">
    <property type="term" value="P:methionine biosynthetic process"/>
    <property type="evidence" value="ECO:0007669"/>
    <property type="project" value="UniProtKB-UniRule"/>
</dbReference>
<dbReference type="GO" id="GO:0032259">
    <property type="term" value="P:methylation"/>
    <property type="evidence" value="ECO:0007669"/>
    <property type="project" value="UniProtKB-KW"/>
</dbReference>
<dbReference type="CDD" id="cd03311">
    <property type="entry name" value="CIMS_C_terminal_like"/>
    <property type="match status" value="1"/>
</dbReference>
<dbReference type="CDD" id="cd03312">
    <property type="entry name" value="CIMS_N_terminal_like"/>
    <property type="match status" value="1"/>
</dbReference>
<dbReference type="FunFam" id="3.20.20.210:FF:000002">
    <property type="entry name" value="5-methyltetrahydropteroyltriglutamate--homocysteine methyltransferase"/>
    <property type="match status" value="1"/>
</dbReference>
<dbReference type="Gene3D" id="3.20.20.210">
    <property type="match status" value="2"/>
</dbReference>
<dbReference type="HAMAP" id="MF_00172">
    <property type="entry name" value="Meth_synth"/>
    <property type="match status" value="1"/>
</dbReference>
<dbReference type="InterPro" id="IPR013215">
    <property type="entry name" value="Cbl-indep_Met_Synth_N"/>
</dbReference>
<dbReference type="InterPro" id="IPR006276">
    <property type="entry name" value="Cobalamin-indep_Met_synthase"/>
</dbReference>
<dbReference type="InterPro" id="IPR002629">
    <property type="entry name" value="Met_Synth_C/arc"/>
</dbReference>
<dbReference type="InterPro" id="IPR038071">
    <property type="entry name" value="UROD/MetE-like_sf"/>
</dbReference>
<dbReference type="NCBIfam" id="TIGR01371">
    <property type="entry name" value="met_syn_B12ind"/>
    <property type="match status" value="1"/>
</dbReference>
<dbReference type="NCBIfam" id="NF003556">
    <property type="entry name" value="PRK05222.1"/>
    <property type="match status" value="1"/>
</dbReference>
<dbReference type="PANTHER" id="PTHR30519">
    <property type="entry name" value="5-METHYLTETRAHYDROPTEROYLTRIGLUTAMATE--HOMOCYSTEINE METHYLTRANSFERASE"/>
    <property type="match status" value="1"/>
</dbReference>
<dbReference type="Pfam" id="PF08267">
    <property type="entry name" value="Meth_synt_1"/>
    <property type="match status" value="1"/>
</dbReference>
<dbReference type="Pfam" id="PF01717">
    <property type="entry name" value="Meth_synt_2"/>
    <property type="match status" value="1"/>
</dbReference>
<dbReference type="PIRSF" id="PIRSF000382">
    <property type="entry name" value="MeTrfase_B12_ind"/>
    <property type="match status" value="1"/>
</dbReference>
<dbReference type="SUPFAM" id="SSF51726">
    <property type="entry name" value="UROD/MetE-like"/>
    <property type="match status" value="2"/>
</dbReference>
<keyword id="KW-0028">Amino-acid biosynthesis</keyword>
<keyword id="KW-0479">Metal-binding</keyword>
<keyword id="KW-0486">Methionine biosynthesis</keyword>
<keyword id="KW-0489">Methyltransferase</keyword>
<keyword id="KW-1185">Reference proteome</keyword>
<keyword id="KW-0677">Repeat</keyword>
<keyword id="KW-0808">Transferase</keyword>
<keyword id="KW-0862">Zinc</keyword>
<name>METE_CYTH3</name>
<comment type="function">
    <text evidence="1">Catalyzes the transfer of a methyl group from 5-methyltetrahydrofolate to homocysteine resulting in methionine formation.</text>
</comment>
<comment type="catalytic activity">
    <reaction evidence="1">
        <text>5-methyltetrahydropteroyltri-L-glutamate + L-homocysteine = tetrahydropteroyltri-L-glutamate + L-methionine</text>
        <dbReference type="Rhea" id="RHEA:21196"/>
        <dbReference type="ChEBI" id="CHEBI:57844"/>
        <dbReference type="ChEBI" id="CHEBI:58140"/>
        <dbReference type="ChEBI" id="CHEBI:58199"/>
        <dbReference type="ChEBI" id="CHEBI:58207"/>
        <dbReference type="EC" id="2.1.1.14"/>
    </reaction>
</comment>
<comment type="cofactor">
    <cofactor evidence="1">
        <name>Zn(2+)</name>
        <dbReference type="ChEBI" id="CHEBI:29105"/>
    </cofactor>
    <text evidence="1">Binds 1 zinc ion per subunit.</text>
</comment>
<comment type="pathway">
    <text evidence="1">Amino-acid biosynthesis; L-methionine biosynthesis via de novo pathway; L-methionine from L-homocysteine (MetE route): step 1/1.</text>
</comment>
<comment type="similarity">
    <text evidence="1">Belongs to the vitamin-B12 independent methionine synthase family.</text>
</comment>
<organism>
    <name type="scientific">Cytophaga hutchinsonii (strain ATCC 33406 / DSM 1761 / CIP 103989 / NBRC 15051 / NCIMB 9469 / D465)</name>
    <dbReference type="NCBI Taxonomy" id="269798"/>
    <lineage>
        <taxon>Bacteria</taxon>
        <taxon>Pseudomonadati</taxon>
        <taxon>Bacteroidota</taxon>
        <taxon>Cytophagia</taxon>
        <taxon>Cytophagales</taxon>
        <taxon>Cytophagaceae</taxon>
        <taxon>Cytophaga</taxon>
    </lineage>
</organism>
<evidence type="ECO:0000255" key="1">
    <source>
        <dbReference type="HAMAP-Rule" id="MF_00172"/>
    </source>
</evidence>
<feature type="chain" id="PRO_1000097824" description="5-methyltetrahydropteroyltriglutamate--homocysteine methyltransferase">
    <location>
        <begin position="1"/>
        <end position="775"/>
    </location>
</feature>
<feature type="active site" description="Proton donor" evidence="1">
    <location>
        <position position="711"/>
    </location>
</feature>
<feature type="binding site" evidence="1">
    <location>
        <begin position="15"/>
        <end position="18"/>
    </location>
    <ligand>
        <name>5-methyltetrahydropteroyltri-L-glutamate</name>
        <dbReference type="ChEBI" id="CHEBI:58207"/>
    </ligand>
</feature>
<feature type="binding site" evidence="1">
    <location>
        <position position="118"/>
    </location>
    <ligand>
        <name>5-methyltetrahydropteroyltri-L-glutamate</name>
        <dbReference type="ChEBI" id="CHEBI:58207"/>
    </ligand>
</feature>
<feature type="binding site" evidence="1">
    <location>
        <begin position="448"/>
        <end position="450"/>
    </location>
    <ligand>
        <name>L-homocysteine</name>
        <dbReference type="ChEBI" id="CHEBI:58199"/>
    </ligand>
</feature>
<feature type="binding site" evidence="1">
    <location>
        <begin position="448"/>
        <end position="450"/>
    </location>
    <ligand>
        <name>L-methionine</name>
        <dbReference type="ChEBI" id="CHEBI:57844"/>
    </ligand>
</feature>
<feature type="binding site" evidence="1">
    <location>
        <position position="501"/>
    </location>
    <ligand>
        <name>L-homocysteine</name>
        <dbReference type="ChEBI" id="CHEBI:58199"/>
    </ligand>
</feature>
<feature type="binding site" evidence="1">
    <location>
        <position position="501"/>
    </location>
    <ligand>
        <name>L-methionine</name>
        <dbReference type="ChEBI" id="CHEBI:57844"/>
    </ligand>
</feature>
<feature type="binding site" evidence="1">
    <location>
        <begin position="532"/>
        <end position="533"/>
    </location>
    <ligand>
        <name>5-methyltetrahydropteroyltri-L-glutamate</name>
        <dbReference type="ChEBI" id="CHEBI:58207"/>
    </ligand>
</feature>
<feature type="binding site" evidence="1">
    <location>
        <position position="578"/>
    </location>
    <ligand>
        <name>5-methyltetrahydropteroyltri-L-glutamate</name>
        <dbReference type="ChEBI" id="CHEBI:58207"/>
    </ligand>
</feature>
<feature type="binding site" evidence="1">
    <location>
        <position position="616"/>
    </location>
    <ligand>
        <name>L-homocysteine</name>
        <dbReference type="ChEBI" id="CHEBI:58199"/>
    </ligand>
</feature>
<feature type="binding site" evidence="1">
    <location>
        <position position="616"/>
    </location>
    <ligand>
        <name>L-methionine</name>
        <dbReference type="ChEBI" id="CHEBI:57844"/>
    </ligand>
</feature>
<feature type="binding site" evidence="1">
    <location>
        <position position="622"/>
    </location>
    <ligand>
        <name>5-methyltetrahydropteroyltri-L-glutamate</name>
        <dbReference type="ChEBI" id="CHEBI:58207"/>
    </ligand>
</feature>
<feature type="binding site" evidence="1">
    <location>
        <position position="658"/>
    </location>
    <ligand>
        <name>Zn(2+)</name>
        <dbReference type="ChEBI" id="CHEBI:29105"/>
        <note>catalytic</note>
    </ligand>
</feature>
<feature type="binding site" evidence="1">
    <location>
        <position position="660"/>
    </location>
    <ligand>
        <name>Zn(2+)</name>
        <dbReference type="ChEBI" id="CHEBI:29105"/>
        <note>catalytic</note>
    </ligand>
</feature>
<feature type="binding site" evidence="1">
    <location>
        <position position="682"/>
    </location>
    <ligand>
        <name>Zn(2+)</name>
        <dbReference type="ChEBI" id="CHEBI:29105"/>
        <note>catalytic</note>
    </ligand>
</feature>
<feature type="binding site" evidence="1">
    <location>
        <position position="743"/>
    </location>
    <ligand>
        <name>Zn(2+)</name>
        <dbReference type="ChEBI" id="CHEBI:29105"/>
        <note>catalytic</note>
    </ligand>
</feature>
<gene>
    <name evidence="1" type="primary">metE</name>
    <name type="ordered locus">CHU_3320</name>
</gene>
<proteinExistence type="inferred from homology"/>